<organism>
    <name type="scientific">Staphylococcus epidermidis (strain ATCC 12228 / FDA PCI 1200)</name>
    <dbReference type="NCBI Taxonomy" id="176280"/>
    <lineage>
        <taxon>Bacteria</taxon>
        <taxon>Bacillati</taxon>
        <taxon>Bacillota</taxon>
        <taxon>Bacilli</taxon>
        <taxon>Bacillales</taxon>
        <taxon>Staphylococcaceae</taxon>
        <taxon>Staphylococcus</taxon>
    </lineage>
</organism>
<protein>
    <recommendedName>
        <fullName evidence="1">Lysine--tRNA ligase</fullName>
        <ecNumber evidence="1">6.1.1.6</ecNumber>
    </recommendedName>
    <alternativeName>
        <fullName evidence="1">Lysyl-tRNA synthetase</fullName>
        <shortName evidence="1">LysRS</shortName>
    </alternativeName>
</protein>
<gene>
    <name evidence="1" type="primary">lysS</name>
    <name type="ordered locus">SE_2266</name>
</gene>
<proteinExistence type="inferred from homology"/>
<accession>Q8CQV5</accession>
<name>SYK_STAES</name>
<feature type="chain" id="PRO_0000152682" description="Lysine--tRNA ligase">
    <location>
        <begin position="1"/>
        <end position="495"/>
    </location>
</feature>
<feature type="binding site" evidence="1">
    <location>
        <position position="406"/>
    </location>
    <ligand>
        <name>Mg(2+)</name>
        <dbReference type="ChEBI" id="CHEBI:18420"/>
        <label>1</label>
    </ligand>
</feature>
<feature type="binding site" evidence="1">
    <location>
        <position position="413"/>
    </location>
    <ligand>
        <name>Mg(2+)</name>
        <dbReference type="ChEBI" id="CHEBI:18420"/>
        <label>1</label>
    </ligand>
</feature>
<feature type="binding site" evidence="1">
    <location>
        <position position="413"/>
    </location>
    <ligand>
        <name>Mg(2+)</name>
        <dbReference type="ChEBI" id="CHEBI:18420"/>
        <label>2</label>
    </ligand>
</feature>
<sequence>MSEEMNDQMQVRRQKLQELIDLGIDPFGHRFNRSSTSSELKEQWDQFSKEELHEKEDESHVSIAGRLMTKRGKGKAGFAHIQDLKGQIQIYVRKDQVGDDQFNIWKMADLGDIIGVEGVMFKTNTGEISVKAKSFTLLSKSLRPLPDKFHGLQDIEQRYRQRYLDLITNEDSTQTFINRSKIIQEMRNYLNKQGFLEVETPMMHQIAGGAAARPFVTHHNALDATLYMRIAIELHLKRLIVGGLEKVYEIGRVFRNEGVSTRHNPEFTMIELYEAYADYHDIMDLTENMVRHIAQEVFGSAKVQYNDEEIDLESSWKRLHIVDAVKEVTGVDFYNVNSDEEAIRLAKEHDIEITENMKYGHILNEFFEQKVEETLIQPTFIYGHPIEISPLAKKNPNDERFTDRFELFIVGREHANAFTELNDPIDQRQRFEAQLVEKEQGNDEAHDMDEDYIEALEYGMPPTGGLGIGIDRLVMLLTDSPSIRDVLLFPYMRQK</sequence>
<reference key="1">
    <citation type="journal article" date="2003" name="Mol. Microbiol.">
        <title>Genome-based analysis of virulence genes in a non-biofilm-forming Staphylococcus epidermidis strain (ATCC 12228).</title>
        <authorList>
            <person name="Zhang Y.-Q."/>
            <person name="Ren S.-X."/>
            <person name="Li H.-L."/>
            <person name="Wang Y.-X."/>
            <person name="Fu G."/>
            <person name="Yang J."/>
            <person name="Qin Z.-Q."/>
            <person name="Miao Y.-G."/>
            <person name="Wang W.-Y."/>
            <person name="Chen R.-S."/>
            <person name="Shen Y."/>
            <person name="Chen Z."/>
            <person name="Yuan Z.-H."/>
            <person name="Zhao G.-P."/>
            <person name="Qu D."/>
            <person name="Danchin A."/>
            <person name="Wen Y.-M."/>
        </authorList>
    </citation>
    <scope>NUCLEOTIDE SEQUENCE [LARGE SCALE GENOMIC DNA]</scope>
    <source>
        <strain>ATCC 12228 / FDA PCI 1200</strain>
    </source>
</reference>
<keyword id="KW-0030">Aminoacyl-tRNA synthetase</keyword>
<keyword id="KW-0067">ATP-binding</keyword>
<keyword id="KW-0963">Cytoplasm</keyword>
<keyword id="KW-0436">Ligase</keyword>
<keyword id="KW-0460">Magnesium</keyword>
<keyword id="KW-0479">Metal-binding</keyword>
<keyword id="KW-0547">Nucleotide-binding</keyword>
<keyword id="KW-0648">Protein biosynthesis</keyword>
<dbReference type="EC" id="6.1.1.6" evidence="1"/>
<dbReference type="EMBL" id="AE015929">
    <property type="protein sequence ID" value="AAO05908.1"/>
    <property type="molecule type" value="Genomic_DNA"/>
</dbReference>
<dbReference type="RefSeq" id="NP_765821.1">
    <property type="nucleotide sequence ID" value="NC_004461.1"/>
</dbReference>
<dbReference type="RefSeq" id="WP_001833056.1">
    <property type="nucleotide sequence ID" value="NZ_WBME01000023.1"/>
</dbReference>
<dbReference type="SMR" id="Q8CQV5"/>
<dbReference type="GeneID" id="50019572"/>
<dbReference type="KEGG" id="sep:SE_2266"/>
<dbReference type="PATRIC" id="fig|176280.10.peg.2209"/>
<dbReference type="eggNOG" id="COG1190">
    <property type="taxonomic scope" value="Bacteria"/>
</dbReference>
<dbReference type="HOGENOM" id="CLU_008255_6_0_9"/>
<dbReference type="OrthoDB" id="9801152at2"/>
<dbReference type="Proteomes" id="UP000001411">
    <property type="component" value="Chromosome"/>
</dbReference>
<dbReference type="GO" id="GO:0005829">
    <property type="term" value="C:cytosol"/>
    <property type="evidence" value="ECO:0007669"/>
    <property type="project" value="TreeGrafter"/>
</dbReference>
<dbReference type="GO" id="GO:0005524">
    <property type="term" value="F:ATP binding"/>
    <property type="evidence" value="ECO:0007669"/>
    <property type="project" value="UniProtKB-UniRule"/>
</dbReference>
<dbReference type="GO" id="GO:0140096">
    <property type="term" value="F:catalytic activity, acting on a protein"/>
    <property type="evidence" value="ECO:0007669"/>
    <property type="project" value="UniProtKB-ARBA"/>
</dbReference>
<dbReference type="GO" id="GO:0004824">
    <property type="term" value="F:lysine-tRNA ligase activity"/>
    <property type="evidence" value="ECO:0007669"/>
    <property type="project" value="UniProtKB-UniRule"/>
</dbReference>
<dbReference type="GO" id="GO:0000287">
    <property type="term" value="F:magnesium ion binding"/>
    <property type="evidence" value="ECO:0007669"/>
    <property type="project" value="UniProtKB-UniRule"/>
</dbReference>
<dbReference type="GO" id="GO:0016740">
    <property type="term" value="F:transferase activity"/>
    <property type="evidence" value="ECO:0007669"/>
    <property type="project" value="UniProtKB-ARBA"/>
</dbReference>
<dbReference type="GO" id="GO:0000049">
    <property type="term" value="F:tRNA binding"/>
    <property type="evidence" value="ECO:0007669"/>
    <property type="project" value="TreeGrafter"/>
</dbReference>
<dbReference type="GO" id="GO:0006430">
    <property type="term" value="P:lysyl-tRNA aminoacylation"/>
    <property type="evidence" value="ECO:0007669"/>
    <property type="project" value="UniProtKB-UniRule"/>
</dbReference>
<dbReference type="CDD" id="cd00775">
    <property type="entry name" value="LysRS_core"/>
    <property type="match status" value="1"/>
</dbReference>
<dbReference type="CDD" id="cd04322">
    <property type="entry name" value="LysRS_N"/>
    <property type="match status" value="1"/>
</dbReference>
<dbReference type="FunFam" id="2.40.50.140:FF:000024">
    <property type="entry name" value="Lysine--tRNA ligase"/>
    <property type="match status" value="1"/>
</dbReference>
<dbReference type="FunFam" id="3.30.930.10:FF:000001">
    <property type="entry name" value="Lysine--tRNA ligase"/>
    <property type="match status" value="1"/>
</dbReference>
<dbReference type="Gene3D" id="3.30.930.10">
    <property type="entry name" value="Bira Bifunctional Protein, Domain 2"/>
    <property type="match status" value="1"/>
</dbReference>
<dbReference type="Gene3D" id="2.40.50.140">
    <property type="entry name" value="Nucleic acid-binding proteins"/>
    <property type="match status" value="1"/>
</dbReference>
<dbReference type="HAMAP" id="MF_00252">
    <property type="entry name" value="Lys_tRNA_synth_class2"/>
    <property type="match status" value="1"/>
</dbReference>
<dbReference type="InterPro" id="IPR004364">
    <property type="entry name" value="Aa-tRNA-synt_II"/>
</dbReference>
<dbReference type="InterPro" id="IPR006195">
    <property type="entry name" value="aa-tRNA-synth_II"/>
</dbReference>
<dbReference type="InterPro" id="IPR045864">
    <property type="entry name" value="aa-tRNA-synth_II/BPL/LPL"/>
</dbReference>
<dbReference type="InterPro" id="IPR002313">
    <property type="entry name" value="Lys-tRNA-ligase_II"/>
</dbReference>
<dbReference type="InterPro" id="IPR034762">
    <property type="entry name" value="Lys-tRNA-ligase_II_bac/euk"/>
</dbReference>
<dbReference type="InterPro" id="IPR044136">
    <property type="entry name" value="Lys-tRNA-ligase_II_N"/>
</dbReference>
<dbReference type="InterPro" id="IPR018149">
    <property type="entry name" value="Lys-tRNA-synth_II_C"/>
</dbReference>
<dbReference type="InterPro" id="IPR012340">
    <property type="entry name" value="NA-bd_OB-fold"/>
</dbReference>
<dbReference type="InterPro" id="IPR004365">
    <property type="entry name" value="NA-bd_OB_tRNA"/>
</dbReference>
<dbReference type="NCBIfam" id="TIGR00499">
    <property type="entry name" value="lysS_bact"/>
    <property type="match status" value="1"/>
</dbReference>
<dbReference type="NCBIfam" id="NF001756">
    <property type="entry name" value="PRK00484.1"/>
    <property type="match status" value="1"/>
</dbReference>
<dbReference type="PANTHER" id="PTHR42918:SF15">
    <property type="entry name" value="LYSINE--TRNA LIGASE, CHLOROPLASTIC_MITOCHONDRIAL"/>
    <property type="match status" value="1"/>
</dbReference>
<dbReference type="PANTHER" id="PTHR42918">
    <property type="entry name" value="LYSYL-TRNA SYNTHETASE"/>
    <property type="match status" value="1"/>
</dbReference>
<dbReference type="Pfam" id="PF00152">
    <property type="entry name" value="tRNA-synt_2"/>
    <property type="match status" value="1"/>
</dbReference>
<dbReference type="Pfam" id="PF01336">
    <property type="entry name" value="tRNA_anti-codon"/>
    <property type="match status" value="1"/>
</dbReference>
<dbReference type="PIRSF" id="PIRSF039101">
    <property type="entry name" value="LysRS2"/>
    <property type="match status" value="1"/>
</dbReference>
<dbReference type="PRINTS" id="PR00982">
    <property type="entry name" value="TRNASYNTHLYS"/>
</dbReference>
<dbReference type="SUPFAM" id="SSF55681">
    <property type="entry name" value="Class II aaRS and biotin synthetases"/>
    <property type="match status" value="1"/>
</dbReference>
<dbReference type="SUPFAM" id="SSF50249">
    <property type="entry name" value="Nucleic acid-binding proteins"/>
    <property type="match status" value="1"/>
</dbReference>
<dbReference type="PROSITE" id="PS50862">
    <property type="entry name" value="AA_TRNA_LIGASE_II"/>
    <property type="match status" value="1"/>
</dbReference>
<evidence type="ECO:0000255" key="1">
    <source>
        <dbReference type="HAMAP-Rule" id="MF_00252"/>
    </source>
</evidence>
<comment type="catalytic activity">
    <reaction evidence="1">
        <text>tRNA(Lys) + L-lysine + ATP = L-lysyl-tRNA(Lys) + AMP + diphosphate</text>
        <dbReference type="Rhea" id="RHEA:20792"/>
        <dbReference type="Rhea" id="RHEA-COMP:9696"/>
        <dbReference type="Rhea" id="RHEA-COMP:9697"/>
        <dbReference type="ChEBI" id="CHEBI:30616"/>
        <dbReference type="ChEBI" id="CHEBI:32551"/>
        <dbReference type="ChEBI" id="CHEBI:33019"/>
        <dbReference type="ChEBI" id="CHEBI:78442"/>
        <dbReference type="ChEBI" id="CHEBI:78529"/>
        <dbReference type="ChEBI" id="CHEBI:456215"/>
        <dbReference type="EC" id="6.1.1.6"/>
    </reaction>
</comment>
<comment type="cofactor">
    <cofactor evidence="1">
        <name>Mg(2+)</name>
        <dbReference type="ChEBI" id="CHEBI:18420"/>
    </cofactor>
    <text evidence="1">Binds 3 Mg(2+) ions per subunit.</text>
</comment>
<comment type="subunit">
    <text evidence="1">Homodimer.</text>
</comment>
<comment type="subcellular location">
    <subcellularLocation>
        <location evidence="1">Cytoplasm</location>
    </subcellularLocation>
</comment>
<comment type="similarity">
    <text evidence="1">Belongs to the class-II aminoacyl-tRNA synthetase family.</text>
</comment>